<reference key="1">
    <citation type="submission" date="2006-08" db="EMBL/GenBank/DDBJ databases">
        <title>Complete sequence of Alkalilimnicola ehrilichei MLHE-1.</title>
        <authorList>
            <person name="Copeland A."/>
            <person name="Lucas S."/>
            <person name="Lapidus A."/>
            <person name="Barry K."/>
            <person name="Detter J.C."/>
            <person name="Glavina del Rio T."/>
            <person name="Hammon N."/>
            <person name="Israni S."/>
            <person name="Dalin E."/>
            <person name="Tice H."/>
            <person name="Pitluck S."/>
            <person name="Sims D."/>
            <person name="Brettin T."/>
            <person name="Bruce D."/>
            <person name="Han C."/>
            <person name="Tapia R."/>
            <person name="Gilna P."/>
            <person name="Schmutz J."/>
            <person name="Larimer F."/>
            <person name="Land M."/>
            <person name="Hauser L."/>
            <person name="Kyrpides N."/>
            <person name="Mikhailova N."/>
            <person name="Oremland R.S."/>
            <person name="Hoeft S.E."/>
            <person name="Switzer-Blum J."/>
            <person name="Kulp T."/>
            <person name="King G."/>
            <person name="Tabita R."/>
            <person name="Witte B."/>
            <person name="Santini J.M."/>
            <person name="Basu P."/>
            <person name="Hollibaugh J.T."/>
            <person name="Xie G."/>
            <person name="Stolz J.F."/>
            <person name="Richardson P."/>
        </authorList>
    </citation>
    <scope>NUCLEOTIDE SEQUENCE [LARGE SCALE GENOMIC DNA]</scope>
    <source>
        <strain>ATCC BAA-1101 / DSM 17681 / MLHE-1</strain>
    </source>
</reference>
<name>DNAJ_ALKEH</name>
<proteinExistence type="inferred from homology"/>
<protein>
    <recommendedName>
        <fullName evidence="1">Chaperone protein DnaJ</fullName>
    </recommendedName>
</protein>
<accession>Q0A7E4</accession>
<organism>
    <name type="scientific">Alkalilimnicola ehrlichii (strain ATCC BAA-1101 / DSM 17681 / MLHE-1)</name>
    <dbReference type="NCBI Taxonomy" id="187272"/>
    <lineage>
        <taxon>Bacteria</taxon>
        <taxon>Pseudomonadati</taxon>
        <taxon>Pseudomonadota</taxon>
        <taxon>Gammaproteobacteria</taxon>
        <taxon>Chromatiales</taxon>
        <taxon>Ectothiorhodospiraceae</taxon>
        <taxon>Alkalilimnicola</taxon>
    </lineage>
</organism>
<dbReference type="EMBL" id="CP000453">
    <property type="protein sequence ID" value="ABI57243.1"/>
    <property type="molecule type" value="Genomic_DNA"/>
</dbReference>
<dbReference type="RefSeq" id="WP_011629637.1">
    <property type="nucleotide sequence ID" value="NC_008340.1"/>
</dbReference>
<dbReference type="SMR" id="Q0A7E4"/>
<dbReference type="KEGG" id="aeh:Mlg_1899"/>
<dbReference type="eggNOG" id="COG0484">
    <property type="taxonomic scope" value="Bacteria"/>
</dbReference>
<dbReference type="HOGENOM" id="CLU_017633_0_7_6"/>
<dbReference type="OrthoDB" id="9779889at2"/>
<dbReference type="Proteomes" id="UP000001962">
    <property type="component" value="Chromosome"/>
</dbReference>
<dbReference type="GO" id="GO:0005737">
    <property type="term" value="C:cytoplasm"/>
    <property type="evidence" value="ECO:0007669"/>
    <property type="project" value="UniProtKB-SubCell"/>
</dbReference>
<dbReference type="GO" id="GO:0005524">
    <property type="term" value="F:ATP binding"/>
    <property type="evidence" value="ECO:0007669"/>
    <property type="project" value="InterPro"/>
</dbReference>
<dbReference type="GO" id="GO:0031072">
    <property type="term" value="F:heat shock protein binding"/>
    <property type="evidence" value="ECO:0007669"/>
    <property type="project" value="InterPro"/>
</dbReference>
<dbReference type="GO" id="GO:0051082">
    <property type="term" value="F:unfolded protein binding"/>
    <property type="evidence" value="ECO:0007669"/>
    <property type="project" value="UniProtKB-UniRule"/>
</dbReference>
<dbReference type="GO" id="GO:0008270">
    <property type="term" value="F:zinc ion binding"/>
    <property type="evidence" value="ECO:0007669"/>
    <property type="project" value="UniProtKB-UniRule"/>
</dbReference>
<dbReference type="GO" id="GO:0051085">
    <property type="term" value="P:chaperone cofactor-dependent protein refolding"/>
    <property type="evidence" value="ECO:0007669"/>
    <property type="project" value="TreeGrafter"/>
</dbReference>
<dbReference type="GO" id="GO:0006260">
    <property type="term" value="P:DNA replication"/>
    <property type="evidence" value="ECO:0007669"/>
    <property type="project" value="UniProtKB-KW"/>
</dbReference>
<dbReference type="GO" id="GO:0042026">
    <property type="term" value="P:protein refolding"/>
    <property type="evidence" value="ECO:0007669"/>
    <property type="project" value="TreeGrafter"/>
</dbReference>
<dbReference type="GO" id="GO:0009408">
    <property type="term" value="P:response to heat"/>
    <property type="evidence" value="ECO:0007669"/>
    <property type="project" value="InterPro"/>
</dbReference>
<dbReference type="CDD" id="cd06257">
    <property type="entry name" value="DnaJ"/>
    <property type="match status" value="1"/>
</dbReference>
<dbReference type="CDD" id="cd10747">
    <property type="entry name" value="DnaJ_C"/>
    <property type="match status" value="1"/>
</dbReference>
<dbReference type="CDD" id="cd10719">
    <property type="entry name" value="DnaJ_zf"/>
    <property type="match status" value="1"/>
</dbReference>
<dbReference type="FunFam" id="1.10.287.110:FF:000034">
    <property type="entry name" value="Chaperone protein DnaJ"/>
    <property type="match status" value="1"/>
</dbReference>
<dbReference type="FunFam" id="2.10.230.10:FF:000002">
    <property type="entry name" value="Molecular chaperone DnaJ"/>
    <property type="match status" value="1"/>
</dbReference>
<dbReference type="FunFam" id="2.60.260.20:FF:000004">
    <property type="entry name" value="Molecular chaperone DnaJ"/>
    <property type="match status" value="1"/>
</dbReference>
<dbReference type="Gene3D" id="1.10.287.110">
    <property type="entry name" value="DnaJ domain"/>
    <property type="match status" value="1"/>
</dbReference>
<dbReference type="Gene3D" id="2.10.230.10">
    <property type="entry name" value="Heat shock protein DnaJ, cysteine-rich domain"/>
    <property type="match status" value="1"/>
</dbReference>
<dbReference type="Gene3D" id="2.60.260.20">
    <property type="entry name" value="Urease metallochaperone UreE, N-terminal domain"/>
    <property type="match status" value="2"/>
</dbReference>
<dbReference type="HAMAP" id="MF_01152">
    <property type="entry name" value="DnaJ"/>
    <property type="match status" value="1"/>
</dbReference>
<dbReference type="InterPro" id="IPR012724">
    <property type="entry name" value="DnaJ"/>
</dbReference>
<dbReference type="InterPro" id="IPR002939">
    <property type="entry name" value="DnaJ_C"/>
</dbReference>
<dbReference type="InterPro" id="IPR001623">
    <property type="entry name" value="DnaJ_domain"/>
</dbReference>
<dbReference type="InterPro" id="IPR018253">
    <property type="entry name" value="DnaJ_domain_CS"/>
</dbReference>
<dbReference type="InterPro" id="IPR008971">
    <property type="entry name" value="HSP40/DnaJ_pept-bd"/>
</dbReference>
<dbReference type="InterPro" id="IPR001305">
    <property type="entry name" value="HSP_DnaJ_Cys-rich_dom"/>
</dbReference>
<dbReference type="InterPro" id="IPR036410">
    <property type="entry name" value="HSP_DnaJ_Cys-rich_dom_sf"/>
</dbReference>
<dbReference type="InterPro" id="IPR036869">
    <property type="entry name" value="J_dom_sf"/>
</dbReference>
<dbReference type="NCBIfam" id="TIGR02349">
    <property type="entry name" value="DnaJ_bact"/>
    <property type="match status" value="1"/>
</dbReference>
<dbReference type="NCBIfam" id="NF008035">
    <property type="entry name" value="PRK10767.1"/>
    <property type="match status" value="1"/>
</dbReference>
<dbReference type="PANTHER" id="PTHR43096:SF48">
    <property type="entry name" value="CHAPERONE PROTEIN DNAJ"/>
    <property type="match status" value="1"/>
</dbReference>
<dbReference type="PANTHER" id="PTHR43096">
    <property type="entry name" value="DNAJ HOMOLOG 1, MITOCHONDRIAL-RELATED"/>
    <property type="match status" value="1"/>
</dbReference>
<dbReference type="Pfam" id="PF00226">
    <property type="entry name" value="DnaJ"/>
    <property type="match status" value="1"/>
</dbReference>
<dbReference type="Pfam" id="PF01556">
    <property type="entry name" value="DnaJ_C"/>
    <property type="match status" value="1"/>
</dbReference>
<dbReference type="Pfam" id="PF00684">
    <property type="entry name" value="DnaJ_CXXCXGXG"/>
    <property type="match status" value="1"/>
</dbReference>
<dbReference type="PRINTS" id="PR00625">
    <property type="entry name" value="JDOMAIN"/>
</dbReference>
<dbReference type="SMART" id="SM00271">
    <property type="entry name" value="DnaJ"/>
    <property type="match status" value="1"/>
</dbReference>
<dbReference type="SUPFAM" id="SSF46565">
    <property type="entry name" value="Chaperone J-domain"/>
    <property type="match status" value="1"/>
</dbReference>
<dbReference type="SUPFAM" id="SSF57938">
    <property type="entry name" value="DnaJ/Hsp40 cysteine-rich domain"/>
    <property type="match status" value="1"/>
</dbReference>
<dbReference type="SUPFAM" id="SSF49493">
    <property type="entry name" value="HSP40/DnaJ peptide-binding domain"/>
    <property type="match status" value="2"/>
</dbReference>
<dbReference type="PROSITE" id="PS00636">
    <property type="entry name" value="DNAJ_1"/>
    <property type="match status" value="1"/>
</dbReference>
<dbReference type="PROSITE" id="PS50076">
    <property type="entry name" value="DNAJ_2"/>
    <property type="match status" value="1"/>
</dbReference>
<dbReference type="PROSITE" id="PS51188">
    <property type="entry name" value="ZF_CR"/>
    <property type="match status" value="1"/>
</dbReference>
<gene>
    <name evidence="1" type="primary">dnaJ</name>
    <name type="ordered locus">Mlg_1899</name>
</gene>
<feature type="chain" id="PRO_1000085139" description="Chaperone protein DnaJ">
    <location>
        <begin position="1"/>
        <end position="383"/>
    </location>
</feature>
<feature type="domain" description="J" evidence="1">
    <location>
        <begin position="5"/>
        <end position="70"/>
    </location>
</feature>
<feature type="repeat" description="CXXCXGXG motif">
    <location>
        <begin position="152"/>
        <end position="159"/>
    </location>
</feature>
<feature type="repeat" description="CXXCXGXG motif">
    <location>
        <begin position="169"/>
        <end position="176"/>
    </location>
</feature>
<feature type="repeat" description="CXXCXGXG motif">
    <location>
        <begin position="191"/>
        <end position="198"/>
    </location>
</feature>
<feature type="repeat" description="CXXCXGXG motif">
    <location>
        <begin position="205"/>
        <end position="212"/>
    </location>
</feature>
<feature type="zinc finger region" description="CR-type" evidence="1">
    <location>
        <begin position="139"/>
        <end position="217"/>
    </location>
</feature>
<feature type="region of interest" description="Disordered" evidence="2">
    <location>
        <begin position="230"/>
        <end position="249"/>
    </location>
</feature>
<feature type="binding site" evidence="1">
    <location>
        <position position="152"/>
    </location>
    <ligand>
        <name>Zn(2+)</name>
        <dbReference type="ChEBI" id="CHEBI:29105"/>
        <label>1</label>
    </ligand>
</feature>
<feature type="binding site" evidence="1">
    <location>
        <position position="155"/>
    </location>
    <ligand>
        <name>Zn(2+)</name>
        <dbReference type="ChEBI" id="CHEBI:29105"/>
        <label>1</label>
    </ligand>
</feature>
<feature type="binding site" evidence="1">
    <location>
        <position position="169"/>
    </location>
    <ligand>
        <name>Zn(2+)</name>
        <dbReference type="ChEBI" id="CHEBI:29105"/>
        <label>2</label>
    </ligand>
</feature>
<feature type="binding site" evidence="1">
    <location>
        <position position="172"/>
    </location>
    <ligand>
        <name>Zn(2+)</name>
        <dbReference type="ChEBI" id="CHEBI:29105"/>
        <label>2</label>
    </ligand>
</feature>
<feature type="binding site" evidence="1">
    <location>
        <position position="191"/>
    </location>
    <ligand>
        <name>Zn(2+)</name>
        <dbReference type="ChEBI" id="CHEBI:29105"/>
        <label>2</label>
    </ligand>
</feature>
<feature type="binding site" evidence="1">
    <location>
        <position position="194"/>
    </location>
    <ligand>
        <name>Zn(2+)</name>
        <dbReference type="ChEBI" id="CHEBI:29105"/>
        <label>2</label>
    </ligand>
</feature>
<feature type="binding site" evidence="1">
    <location>
        <position position="205"/>
    </location>
    <ligand>
        <name>Zn(2+)</name>
        <dbReference type="ChEBI" id="CHEBI:29105"/>
        <label>1</label>
    </ligand>
</feature>
<feature type="binding site" evidence="1">
    <location>
        <position position="208"/>
    </location>
    <ligand>
        <name>Zn(2+)</name>
        <dbReference type="ChEBI" id="CHEBI:29105"/>
        <label>1</label>
    </ligand>
</feature>
<evidence type="ECO:0000255" key="1">
    <source>
        <dbReference type="HAMAP-Rule" id="MF_01152"/>
    </source>
</evidence>
<evidence type="ECO:0000256" key="2">
    <source>
        <dbReference type="SAM" id="MobiDB-lite"/>
    </source>
</evidence>
<sequence>MSKSDYYEALGVARNASDSEIKKAYRRMAMKYHPDRNPGDKEAEARFKEAKEAYEILSDPQKRAAYDQFGHAGVDPSAGMGGAGGPGGPGGPDFADIFSDVFGDIFGGGGRRGGGGRRVFRGADLRYNLELSLEDAVRGTEVQIRVPTQEVCDACDGKGTKEGSQPETCPTCKGHGDVRIQQGFFSVQQTCPRCGGSGSVITDPCRKCGGRGRVQSQKTLSVRVPAGVDTGDRIRLSGEGEPGENGGPPGDLYVQIMVREHEFFQRDGANLRCEVPISITKAALGGEVEVPTLDGRVNLRIPAGAQSGKVFRVRGKGVKPVRGGPQGDLLCRVHVETPVNLTKKQKELLEEFGRTMDDTGDKHTPRTSSWLDKARKFFEDWKL</sequence>
<comment type="function">
    <text evidence="1">Participates actively in the response to hyperosmotic and heat shock by preventing the aggregation of stress-denatured proteins and by disaggregating proteins, also in an autonomous, DnaK-independent fashion. Unfolded proteins bind initially to DnaJ; upon interaction with the DnaJ-bound protein, DnaK hydrolyzes its bound ATP, resulting in the formation of a stable complex. GrpE releases ADP from DnaK; ATP binding to DnaK triggers the release of the substrate protein, thus completing the reaction cycle. Several rounds of ATP-dependent interactions between DnaJ, DnaK and GrpE are required for fully efficient folding. Also involved, together with DnaK and GrpE, in the DNA replication of plasmids through activation of initiation proteins.</text>
</comment>
<comment type="cofactor">
    <cofactor evidence="1">
        <name>Zn(2+)</name>
        <dbReference type="ChEBI" id="CHEBI:29105"/>
    </cofactor>
    <text evidence="1">Binds 2 Zn(2+) ions per monomer.</text>
</comment>
<comment type="subunit">
    <text evidence="1">Homodimer.</text>
</comment>
<comment type="subcellular location">
    <subcellularLocation>
        <location evidence="1">Cytoplasm</location>
    </subcellularLocation>
</comment>
<comment type="domain">
    <text evidence="1">The J domain is necessary and sufficient to stimulate DnaK ATPase activity. Zinc center 1 plays an important role in the autonomous, DnaK-independent chaperone activity of DnaJ. Zinc center 2 is essential for interaction with DnaK and for DnaJ activity.</text>
</comment>
<comment type="similarity">
    <text evidence="1">Belongs to the DnaJ family.</text>
</comment>
<keyword id="KW-0143">Chaperone</keyword>
<keyword id="KW-0963">Cytoplasm</keyword>
<keyword id="KW-0235">DNA replication</keyword>
<keyword id="KW-0479">Metal-binding</keyword>
<keyword id="KW-1185">Reference proteome</keyword>
<keyword id="KW-0677">Repeat</keyword>
<keyword id="KW-0346">Stress response</keyword>
<keyword id="KW-0862">Zinc</keyword>
<keyword id="KW-0863">Zinc-finger</keyword>